<gene>
    <name type="primary">RH18</name>
    <name type="ordered locus">At5g05450</name>
    <name type="ORF">K18I23.26</name>
</gene>
<name>RH18_ARATH</name>
<feature type="chain" id="PRO_0000239160" description="DEAD-box ATP-dependent RNA helicase 18">
    <location>
        <begin position="1"/>
        <end position="593"/>
    </location>
</feature>
<feature type="domain" description="Helicase ATP-binding" evidence="1">
    <location>
        <begin position="47"/>
        <end position="226"/>
    </location>
</feature>
<feature type="domain" description="Helicase C-terminal" evidence="2">
    <location>
        <begin position="264"/>
        <end position="411"/>
    </location>
</feature>
<feature type="region of interest" description="Disordered" evidence="3">
    <location>
        <begin position="506"/>
        <end position="561"/>
    </location>
</feature>
<feature type="short sequence motif" description="Q motif">
    <location>
        <begin position="16"/>
        <end position="44"/>
    </location>
</feature>
<feature type="short sequence motif" description="DEAD box">
    <location>
        <begin position="174"/>
        <end position="177"/>
    </location>
</feature>
<feature type="compositionally biased region" description="Basic and acidic residues" evidence="3">
    <location>
        <begin position="506"/>
        <end position="524"/>
    </location>
</feature>
<feature type="binding site" evidence="1">
    <location>
        <begin position="60"/>
        <end position="67"/>
    </location>
    <ligand>
        <name>ATP</name>
        <dbReference type="ChEBI" id="CHEBI:30616"/>
    </ligand>
</feature>
<feature type="sequence conflict" description="In Ref. 3; CAA09208." evidence="4" ref="3">
    <original>A</original>
    <variation>R</variation>
    <location>
        <position position="258"/>
    </location>
</feature>
<keyword id="KW-0067">ATP-binding</keyword>
<keyword id="KW-0347">Helicase</keyword>
<keyword id="KW-0378">Hydrolase</keyword>
<keyword id="KW-0547">Nucleotide-binding</keyword>
<keyword id="KW-1185">Reference proteome</keyword>
<keyword id="KW-0694">RNA-binding</keyword>
<organism>
    <name type="scientific">Arabidopsis thaliana</name>
    <name type="common">Mouse-ear cress</name>
    <dbReference type="NCBI Taxonomy" id="3702"/>
    <lineage>
        <taxon>Eukaryota</taxon>
        <taxon>Viridiplantae</taxon>
        <taxon>Streptophyta</taxon>
        <taxon>Embryophyta</taxon>
        <taxon>Tracheophyta</taxon>
        <taxon>Spermatophyta</taxon>
        <taxon>Magnoliopsida</taxon>
        <taxon>eudicotyledons</taxon>
        <taxon>Gunneridae</taxon>
        <taxon>Pentapetalae</taxon>
        <taxon>rosids</taxon>
        <taxon>malvids</taxon>
        <taxon>Brassicales</taxon>
        <taxon>Brassicaceae</taxon>
        <taxon>Camelineae</taxon>
        <taxon>Arabidopsis</taxon>
    </lineage>
</organism>
<proteinExistence type="evidence at transcript level"/>
<accession>Q9FLB0</accession>
<accession>Q9ZS03</accession>
<evidence type="ECO:0000255" key="1">
    <source>
        <dbReference type="PROSITE-ProRule" id="PRU00541"/>
    </source>
</evidence>
<evidence type="ECO:0000255" key="2">
    <source>
        <dbReference type="PROSITE-ProRule" id="PRU00542"/>
    </source>
</evidence>
<evidence type="ECO:0000256" key="3">
    <source>
        <dbReference type="SAM" id="MobiDB-lite"/>
    </source>
</evidence>
<evidence type="ECO:0000305" key="4"/>
<reference key="1">
    <citation type="journal article" date="1998" name="DNA Res.">
        <title>Structural analysis of Arabidopsis thaliana chromosome 5. V. Sequence features of the regions of 1,381,565 bp covered by twenty one physically assigned P1 and TAC clones.</title>
        <authorList>
            <person name="Kaneko T."/>
            <person name="Kotani H."/>
            <person name="Nakamura Y."/>
            <person name="Sato S."/>
            <person name="Asamizu E."/>
            <person name="Miyajima N."/>
            <person name="Tabata S."/>
        </authorList>
    </citation>
    <scope>NUCLEOTIDE SEQUENCE [LARGE SCALE GENOMIC DNA]</scope>
    <source>
        <strain>cv. Columbia</strain>
    </source>
</reference>
<reference key="2">
    <citation type="journal article" date="2017" name="Plant J.">
        <title>Araport11: a complete reannotation of the Arabidopsis thaliana reference genome.</title>
        <authorList>
            <person name="Cheng C.Y."/>
            <person name="Krishnakumar V."/>
            <person name="Chan A.P."/>
            <person name="Thibaud-Nissen F."/>
            <person name="Schobel S."/>
            <person name="Town C.D."/>
        </authorList>
    </citation>
    <scope>GENOME REANNOTATION</scope>
    <source>
        <strain>cv. Columbia</strain>
    </source>
</reference>
<reference key="3">
    <citation type="journal article" date="1999" name="Nucleic Acids Res.">
        <title>The DEAD box RNA helicase family in Arabidopsis thaliana.</title>
        <authorList>
            <person name="Aubourg S."/>
            <person name="Kreis M."/>
            <person name="Lecharny A."/>
        </authorList>
    </citation>
    <scope>NUCLEOTIDE SEQUENCE [MRNA] OF 234-593</scope>
    <source>
        <strain>cv. Columbia</strain>
    </source>
</reference>
<reference key="4">
    <citation type="journal article" date="2004" name="Plant Biotechnol. J.">
        <title>DEAD-box RNA helicases in Arabidopsis thaliana: establishing a link between quantitative expression, gene structure and evolution of a family of genes.</title>
        <authorList>
            <person name="Mingam A."/>
            <person name="Toffano-Nioche C."/>
            <person name="Brunaud V."/>
            <person name="Boudet N."/>
            <person name="Kreis M."/>
            <person name="Lecharny A."/>
        </authorList>
    </citation>
    <scope>GENE FAMILY</scope>
    <scope>NOMENCLATURE</scope>
</reference>
<reference key="5">
    <citation type="journal article" date="2013" name="PLoS ONE">
        <title>Genome-wide comparative in silico analysis of the RNA helicase gene family in Zea mays and Glycine max: a comparison with Arabidopsis and Oryza sativa.</title>
        <authorList>
            <person name="Xu R."/>
            <person name="Zhang S."/>
            <person name="Huang J."/>
            <person name="Zheng C."/>
        </authorList>
    </citation>
    <scope>GENE FAMILY</scope>
</reference>
<sequence>MDSSANINKALTETRFSDLEPPLSGDIIEALNQSDFEFCTPVQAATIPLLCSYKDVAVDAATGSGKTLAFVVPLVEILRRSTSFPPKPHQVMGVIISPTRELSTQIYNVAQPFVSTLANVNSVLLVGGREVKADMKIIEEEGCNVLIGTPGRLSDIMERMEILDFRNLEILILDEADRLLEMGFQRQVNYIISRLPKQRRTGLFSATQTEGVEELAKAGLRNPVRVEVRAKSKSESSQQLTNSKTPSGLHLEYMECEADKKSSQLVDLLIKNSDKKLIVFFMTCASVDYWGLVLSKIPALKSISLIPIHGDMKQNARDKALASFTKASSGALLCTDVAARGLDIPGIDYVVQYDPPQDPNMFNHRAGRTARLGRQGRAIVFLLPKEEAYVEFMRIRRVPLEERKCSEDASDVIPIIRSAAMKDRAVMEKGLKAFVSFVRAYKEHHCSFIFRWKDLEIGKLAMGYGLLYLPSMSEVKQHRLSSEGFTPVEGVKFEEIKFKDKYREKQRQQNLQVRKEKRQEEKKEKGKRKRVDASASNDPKKASRKLTGKQRQTIQTAEDEEVMDRDYKLMIKVKKGLIKEDEYERLTGDDDLF</sequence>
<comment type="catalytic activity">
    <reaction>
        <text>ATP + H2O = ADP + phosphate + H(+)</text>
        <dbReference type="Rhea" id="RHEA:13065"/>
        <dbReference type="ChEBI" id="CHEBI:15377"/>
        <dbReference type="ChEBI" id="CHEBI:15378"/>
        <dbReference type="ChEBI" id="CHEBI:30616"/>
        <dbReference type="ChEBI" id="CHEBI:43474"/>
        <dbReference type="ChEBI" id="CHEBI:456216"/>
        <dbReference type="EC" id="3.6.4.13"/>
    </reaction>
</comment>
<comment type="domain">
    <text>The Q motif is unique to and characteristic of the DEAD box family of RNA helicases and controls ATP binding and hydrolysis.</text>
</comment>
<comment type="similarity">
    <text evidence="4">Belongs to the DEAD box helicase family. DDX55/SPB4 subfamily.</text>
</comment>
<dbReference type="EC" id="3.6.4.13"/>
<dbReference type="EMBL" id="AB010692">
    <property type="protein sequence ID" value="BAB09988.1"/>
    <property type="molecule type" value="Genomic_DNA"/>
</dbReference>
<dbReference type="EMBL" id="CP002688">
    <property type="protein sequence ID" value="AED90875.1"/>
    <property type="molecule type" value="Genomic_DNA"/>
</dbReference>
<dbReference type="EMBL" id="AJ010469">
    <property type="protein sequence ID" value="CAA09208.1"/>
    <property type="molecule type" value="mRNA"/>
</dbReference>
<dbReference type="PIR" id="T51344">
    <property type="entry name" value="T51344"/>
</dbReference>
<dbReference type="RefSeq" id="NP_196164.1">
    <property type="nucleotide sequence ID" value="NM_120627.5"/>
</dbReference>
<dbReference type="SMR" id="Q9FLB0"/>
<dbReference type="FunCoup" id="Q9FLB0">
    <property type="interactions" value="4561"/>
</dbReference>
<dbReference type="STRING" id="3702.Q9FLB0"/>
<dbReference type="iPTMnet" id="Q9FLB0"/>
<dbReference type="PaxDb" id="3702-AT5G05450.1"/>
<dbReference type="ProteomicsDB" id="236940"/>
<dbReference type="EnsemblPlants" id="AT5G05450.1">
    <property type="protein sequence ID" value="AT5G05450.1"/>
    <property type="gene ID" value="AT5G05450"/>
</dbReference>
<dbReference type="GeneID" id="830428"/>
<dbReference type="Gramene" id="AT5G05450.1">
    <property type="protein sequence ID" value="AT5G05450.1"/>
    <property type="gene ID" value="AT5G05450"/>
</dbReference>
<dbReference type="KEGG" id="ath:AT5G05450"/>
<dbReference type="Araport" id="AT5G05450"/>
<dbReference type="TAIR" id="AT5G05450">
    <property type="gene designation" value="RH18"/>
</dbReference>
<dbReference type="eggNOG" id="KOG0345">
    <property type="taxonomic scope" value="Eukaryota"/>
</dbReference>
<dbReference type="HOGENOM" id="CLU_003041_26_4_1"/>
<dbReference type="InParanoid" id="Q9FLB0"/>
<dbReference type="OMA" id="AYKEHEC"/>
<dbReference type="OrthoDB" id="7396459at2759"/>
<dbReference type="PhylomeDB" id="Q9FLB0"/>
<dbReference type="CD-CODE" id="4299E36E">
    <property type="entry name" value="Nucleolus"/>
</dbReference>
<dbReference type="PRO" id="PR:Q9FLB0"/>
<dbReference type="Proteomes" id="UP000006548">
    <property type="component" value="Chromosome 5"/>
</dbReference>
<dbReference type="ExpressionAtlas" id="Q9FLB0">
    <property type="expression patterns" value="baseline and differential"/>
</dbReference>
<dbReference type="GO" id="GO:0005524">
    <property type="term" value="F:ATP binding"/>
    <property type="evidence" value="ECO:0007669"/>
    <property type="project" value="UniProtKB-KW"/>
</dbReference>
<dbReference type="GO" id="GO:0016887">
    <property type="term" value="F:ATP hydrolysis activity"/>
    <property type="evidence" value="ECO:0007669"/>
    <property type="project" value="RHEA"/>
</dbReference>
<dbReference type="GO" id="GO:0003723">
    <property type="term" value="F:RNA binding"/>
    <property type="evidence" value="ECO:0007669"/>
    <property type="project" value="UniProtKB-KW"/>
</dbReference>
<dbReference type="GO" id="GO:0003724">
    <property type="term" value="F:RNA helicase activity"/>
    <property type="evidence" value="ECO:0007669"/>
    <property type="project" value="UniProtKB-EC"/>
</dbReference>
<dbReference type="CDD" id="cd17960">
    <property type="entry name" value="DEADc_DDX55"/>
    <property type="match status" value="1"/>
</dbReference>
<dbReference type="CDD" id="cd18787">
    <property type="entry name" value="SF2_C_DEAD"/>
    <property type="match status" value="1"/>
</dbReference>
<dbReference type="FunFam" id="3.40.50.300:FF:000877">
    <property type="entry name" value="RNA helicase"/>
    <property type="match status" value="1"/>
</dbReference>
<dbReference type="Gene3D" id="3.40.50.300">
    <property type="entry name" value="P-loop containing nucleotide triphosphate hydrolases"/>
    <property type="match status" value="2"/>
</dbReference>
<dbReference type="InterPro" id="IPR011545">
    <property type="entry name" value="DEAD/DEAH_box_helicase_dom"/>
</dbReference>
<dbReference type="InterPro" id="IPR014001">
    <property type="entry name" value="Helicase_ATP-bd"/>
</dbReference>
<dbReference type="InterPro" id="IPR001650">
    <property type="entry name" value="Helicase_C-like"/>
</dbReference>
<dbReference type="InterPro" id="IPR027417">
    <property type="entry name" value="P-loop_NTPase"/>
</dbReference>
<dbReference type="InterPro" id="IPR000629">
    <property type="entry name" value="RNA-helicase_DEAD-box_CS"/>
</dbReference>
<dbReference type="InterPro" id="IPR025313">
    <property type="entry name" value="SPB4-like_CTE"/>
</dbReference>
<dbReference type="PANTHER" id="PTHR24031">
    <property type="entry name" value="RNA HELICASE"/>
    <property type="match status" value="1"/>
</dbReference>
<dbReference type="Pfam" id="PF13959">
    <property type="entry name" value="CTE_SPB4"/>
    <property type="match status" value="1"/>
</dbReference>
<dbReference type="Pfam" id="PF00270">
    <property type="entry name" value="DEAD"/>
    <property type="match status" value="1"/>
</dbReference>
<dbReference type="Pfam" id="PF00271">
    <property type="entry name" value="Helicase_C"/>
    <property type="match status" value="1"/>
</dbReference>
<dbReference type="SMART" id="SM00487">
    <property type="entry name" value="DEXDc"/>
    <property type="match status" value="1"/>
</dbReference>
<dbReference type="SMART" id="SM01178">
    <property type="entry name" value="DUF4217"/>
    <property type="match status" value="1"/>
</dbReference>
<dbReference type="SMART" id="SM00490">
    <property type="entry name" value="HELICc"/>
    <property type="match status" value="1"/>
</dbReference>
<dbReference type="SUPFAM" id="SSF52540">
    <property type="entry name" value="P-loop containing nucleoside triphosphate hydrolases"/>
    <property type="match status" value="1"/>
</dbReference>
<dbReference type="PROSITE" id="PS00039">
    <property type="entry name" value="DEAD_ATP_HELICASE"/>
    <property type="match status" value="1"/>
</dbReference>
<dbReference type="PROSITE" id="PS51192">
    <property type="entry name" value="HELICASE_ATP_BIND_1"/>
    <property type="match status" value="1"/>
</dbReference>
<dbReference type="PROSITE" id="PS51194">
    <property type="entry name" value="HELICASE_CTER"/>
    <property type="match status" value="1"/>
</dbReference>
<dbReference type="PROSITE" id="PS51195">
    <property type="entry name" value="Q_MOTIF"/>
    <property type="match status" value="1"/>
</dbReference>
<protein>
    <recommendedName>
        <fullName>DEAD-box ATP-dependent RNA helicase 18</fullName>
        <ecNumber>3.6.4.13</ecNumber>
    </recommendedName>
</protein>